<reference key="1">
    <citation type="journal article" date="2012" name="Cancer Cell">
        <title>CREPT accelerates tumorigenesis by regulating the transcription of cell-cycle-related genes.</title>
        <authorList>
            <person name="Lu D."/>
            <person name="Wu Y."/>
            <person name="Wang Y."/>
            <person name="Ren F."/>
            <person name="Wang D."/>
            <person name="Su F."/>
            <person name="Zhang Y."/>
            <person name="Yang X."/>
            <person name="Jin G."/>
            <person name="Hao X."/>
            <person name="He D."/>
            <person name="Zhai Y."/>
            <person name="Irwin D.M."/>
            <person name="Hu J."/>
            <person name="Sung J.J."/>
            <person name="Yu J."/>
            <person name="Jia B."/>
            <person name="Chang Z."/>
        </authorList>
    </citation>
    <scope>NUCLEOTIDE SEQUENCE [MRNA]</scope>
    <scope>FUNCTION</scope>
    <scope>INTERACTION WITH RNA POLYMERASE II</scope>
    <scope>SUBCELLULAR LOCATION</scope>
    <scope>TISSUE SPECIFICITY</scope>
</reference>
<reference key="2">
    <citation type="journal article" date="2004" name="Nat. Genet.">
        <title>Complete sequencing and characterization of 21,243 full-length human cDNAs.</title>
        <authorList>
            <person name="Ota T."/>
            <person name="Suzuki Y."/>
            <person name="Nishikawa T."/>
            <person name="Otsuki T."/>
            <person name="Sugiyama T."/>
            <person name="Irie R."/>
            <person name="Wakamatsu A."/>
            <person name="Hayashi K."/>
            <person name="Sato H."/>
            <person name="Nagai K."/>
            <person name="Kimura K."/>
            <person name="Makita H."/>
            <person name="Sekine M."/>
            <person name="Obayashi M."/>
            <person name="Nishi T."/>
            <person name="Shibahara T."/>
            <person name="Tanaka T."/>
            <person name="Ishii S."/>
            <person name="Yamamoto J."/>
            <person name="Saito K."/>
            <person name="Kawai Y."/>
            <person name="Isono Y."/>
            <person name="Nakamura Y."/>
            <person name="Nagahari K."/>
            <person name="Murakami K."/>
            <person name="Yasuda T."/>
            <person name="Iwayanagi T."/>
            <person name="Wagatsuma M."/>
            <person name="Shiratori A."/>
            <person name="Sudo H."/>
            <person name="Hosoiri T."/>
            <person name="Kaku Y."/>
            <person name="Kodaira H."/>
            <person name="Kondo H."/>
            <person name="Sugawara M."/>
            <person name="Takahashi M."/>
            <person name="Kanda K."/>
            <person name="Yokoi T."/>
            <person name="Furuya T."/>
            <person name="Kikkawa E."/>
            <person name="Omura Y."/>
            <person name="Abe K."/>
            <person name="Kamihara K."/>
            <person name="Katsuta N."/>
            <person name="Sato K."/>
            <person name="Tanikawa M."/>
            <person name="Yamazaki M."/>
            <person name="Ninomiya K."/>
            <person name="Ishibashi T."/>
            <person name="Yamashita H."/>
            <person name="Murakawa K."/>
            <person name="Fujimori K."/>
            <person name="Tanai H."/>
            <person name="Kimata M."/>
            <person name="Watanabe M."/>
            <person name="Hiraoka S."/>
            <person name="Chiba Y."/>
            <person name="Ishida S."/>
            <person name="Ono Y."/>
            <person name="Takiguchi S."/>
            <person name="Watanabe S."/>
            <person name="Yosida M."/>
            <person name="Hotuta T."/>
            <person name="Kusano J."/>
            <person name="Kanehori K."/>
            <person name="Takahashi-Fujii A."/>
            <person name="Hara H."/>
            <person name="Tanase T.-O."/>
            <person name="Nomura Y."/>
            <person name="Togiya S."/>
            <person name="Komai F."/>
            <person name="Hara R."/>
            <person name="Takeuchi K."/>
            <person name="Arita M."/>
            <person name="Imose N."/>
            <person name="Musashino K."/>
            <person name="Yuuki H."/>
            <person name="Oshima A."/>
            <person name="Sasaki N."/>
            <person name="Aotsuka S."/>
            <person name="Yoshikawa Y."/>
            <person name="Matsunawa H."/>
            <person name="Ichihara T."/>
            <person name="Shiohata N."/>
            <person name="Sano S."/>
            <person name="Moriya S."/>
            <person name="Momiyama H."/>
            <person name="Satoh N."/>
            <person name="Takami S."/>
            <person name="Terashima Y."/>
            <person name="Suzuki O."/>
            <person name="Nakagawa S."/>
            <person name="Senoh A."/>
            <person name="Mizoguchi H."/>
            <person name="Goto Y."/>
            <person name="Shimizu F."/>
            <person name="Wakebe H."/>
            <person name="Hishigaki H."/>
            <person name="Watanabe T."/>
            <person name="Sugiyama A."/>
            <person name="Takemoto M."/>
            <person name="Kawakami B."/>
            <person name="Yamazaki M."/>
            <person name="Watanabe K."/>
            <person name="Kumagai A."/>
            <person name="Itakura S."/>
            <person name="Fukuzumi Y."/>
            <person name="Fujimori Y."/>
            <person name="Komiyama M."/>
            <person name="Tashiro H."/>
            <person name="Tanigami A."/>
            <person name="Fujiwara T."/>
            <person name="Ono T."/>
            <person name="Yamada K."/>
            <person name="Fujii Y."/>
            <person name="Ozaki K."/>
            <person name="Hirao M."/>
            <person name="Ohmori Y."/>
            <person name="Kawabata A."/>
            <person name="Hikiji T."/>
            <person name="Kobatake N."/>
            <person name="Inagaki H."/>
            <person name="Ikema Y."/>
            <person name="Okamoto S."/>
            <person name="Okitani R."/>
            <person name="Kawakami T."/>
            <person name="Noguchi S."/>
            <person name="Itoh T."/>
            <person name="Shigeta K."/>
            <person name="Senba T."/>
            <person name="Matsumura K."/>
            <person name="Nakajima Y."/>
            <person name="Mizuno T."/>
            <person name="Morinaga M."/>
            <person name="Sasaki M."/>
            <person name="Togashi T."/>
            <person name="Oyama M."/>
            <person name="Hata H."/>
            <person name="Watanabe M."/>
            <person name="Komatsu T."/>
            <person name="Mizushima-Sugano J."/>
            <person name="Satoh T."/>
            <person name="Shirai Y."/>
            <person name="Takahashi Y."/>
            <person name="Nakagawa K."/>
            <person name="Okumura K."/>
            <person name="Nagase T."/>
            <person name="Nomura N."/>
            <person name="Kikuchi H."/>
            <person name="Masuho Y."/>
            <person name="Yamashita R."/>
            <person name="Nakai K."/>
            <person name="Yada T."/>
            <person name="Nakamura Y."/>
            <person name="Ohara O."/>
            <person name="Isogai T."/>
            <person name="Sugano S."/>
        </authorList>
    </citation>
    <scope>NUCLEOTIDE SEQUENCE [LARGE SCALE MRNA]</scope>
    <source>
        <tissue>Hippocampus</tissue>
    </source>
</reference>
<reference key="3">
    <citation type="journal article" date="2001" name="Nature">
        <title>The DNA sequence and comparative analysis of human chromosome 20.</title>
        <authorList>
            <person name="Deloukas P."/>
            <person name="Matthews L.H."/>
            <person name="Ashurst J.L."/>
            <person name="Burton J."/>
            <person name="Gilbert J.G.R."/>
            <person name="Jones M."/>
            <person name="Stavrides G."/>
            <person name="Almeida J.P."/>
            <person name="Babbage A.K."/>
            <person name="Bagguley C.L."/>
            <person name="Bailey J."/>
            <person name="Barlow K.F."/>
            <person name="Bates K.N."/>
            <person name="Beard L.M."/>
            <person name="Beare D.M."/>
            <person name="Beasley O.P."/>
            <person name="Bird C.P."/>
            <person name="Blakey S.E."/>
            <person name="Bridgeman A.M."/>
            <person name="Brown A.J."/>
            <person name="Buck D."/>
            <person name="Burrill W.D."/>
            <person name="Butler A.P."/>
            <person name="Carder C."/>
            <person name="Carter N.P."/>
            <person name="Chapman J.C."/>
            <person name="Clamp M."/>
            <person name="Clark G."/>
            <person name="Clark L.N."/>
            <person name="Clark S.Y."/>
            <person name="Clee C.M."/>
            <person name="Clegg S."/>
            <person name="Cobley V.E."/>
            <person name="Collier R.E."/>
            <person name="Connor R.E."/>
            <person name="Corby N.R."/>
            <person name="Coulson A."/>
            <person name="Coville G.J."/>
            <person name="Deadman R."/>
            <person name="Dhami P.D."/>
            <person name="Dunn M."/>
            <person name="Ellington A.G."/>
            <person name="Frankland J.A."/>
            <person name="Fraser A."/>
            <person name="French L."/>
            <person name="Garner P."/>
            <person name="Grafham D.V."/>
            <person name="Griffiths C."/>
            <person name="Griffiths M.N.D."/>
            <person name="Gwilliam R."/>
            <person name="Hall R.E."/>
            <person name="Hammond S."/>
            <person name="Harley J.L."/>
            <person name="Heath P.D."/>
            <person name="Ho S."/>
            <person name="Holden J.L."/>
            <person name="Howden P.J."/>
            <person name="Huckle E."/>
            <person name="Hunt A.R."/>
            <person name="Hunt S.E."/>
            <person name="Jekosch K."/>
            <person name="Johnson C.M."/>
            <person name="Johnson D."/>
            <person name="Kay M.P."/>
            <person name="Kimberley A.M."/>
            <person name="King A."/>
            <person name="Knights A."/>
            <person name="Laird G.K."/>
            <person name="Lawlor S."/>
            <person name="Lehvaeslaiho M.H."/>
            <person name="Leversha M.A."/>
            <person name="Lloyd C."/>
            <person name="Lloyd D.M."/>
            <person name="Lovell J.D."/>
            <person name="Marsh V.L."/>
            <person name="Martin S.L."/>
            <person name="McConnachie L.J."/>
            <person name="McLay K."/>
            <person name="McMurray A.A."/>
            <person name="Milne S.A."/>
            <person name="Mistry D."/>
            <person name="Moore M.J.F."/>
            <person name="Mullikin J.C."/>
            <person name="Nickerson T."/>
            <person name="Oliver K."/>
            <person name="Parker A."/>
            <person name="Patel R."/>
            <person name="Pearce T.A.V."/>
            <person name="Peck A.I."/>
            <person name="Phillimore B.J.C.T."/>
            <person name="Prathalingam S.R."/>
            <person name="Plumb R.W."/>
            <person name="Ramsay H."/>
            <person name="Rice C.M."/>
            <person name="Ross M.T."/>
            <person name="Scott C.E."/>
            <person name="Sehra H.K."/>
            <person name="Shownkeen R."/>
            <person name="Sims S."/>
            <person name="Skuce C.D."/>
            <person name="Smith M.L."/>
            <person name="Soderlund C."/>
            <person name="Steward C.A."/>
            <person name="Sulston J.E."/>
            <person name="Swann R.M."/>
            <person name="Sycamore N."/>
            <person name="Taylor R."/>
            <person name="Tee L."/>
            <person name="Thomas D.W."/>
            <person name="Thorpe A."/>
            <person name="Tracey A."/>
            <person name="Tromans A.C."/>
            <person name="Vaudin M."/>
            <person name="Wall M."/>
            <person name="Wallis J.M."/>
            <person name="Whitehead S.L."/>
            <person name="Whittaker P."/>
            <person name="Willey D.L."/>
            <person name="Williams L."/>
            <person name="Williams S.A."/>
            <person name="Wilming L."/>
            <person name="Wray P.W."/>
            <person name="Hubbard T."/>
            <person name="Durbin R.M."/>
            <person name="Bentley D.R."/>
            <person name="Beck S."/>
            <person name="Rogers J."/>
        </authorList>
    </citation>
    <scope>NUCLEOTIDE SEQUENCE [LARGE SCALE GENOMIC DNA]</scope>
</reference>
<reference key="4">
    <citation type="submission" date="2005-09" db="EMBL/GenBank/DDBJ databases">
        <authorList>
            <person name="Mural R.J."/>
            <person name="Istrail S."/>
            <person name="Sutton G.G."/>
            <person name="Florea L."/>
            <person name="Halpern A.L."/>
            <person name="Mobarry C.M."/>
            <person name="Lippert R."/>
            <person name="Walenz B."/>
            <person name="Shatkay H."/>
            <person name="Dew I."/>
            <person name="Miller J.R."/>
            <person name="Flanigan M.J."/>
            <person name="Edwards N.J."/>
            <person name="Bolanos R."/>
            <person name="Fasulo D."/>
            <person name="Halldorsson B.V."/>
            <person name="Hannenhalli S."/>
            <person name="Turner R."/>
            <person name="Yooseph S."/>
            <person name="Lu F."/>
            <person name="Nusskern D.R."/>
            <person name="Shue B.C."/>
            <person name="Zheng X.H."/>
            <person name="Zhong F."/>
            <person name="Delcher A.L."/>
            <person name="Huson D.H."/>
            <person name="Kravitz S.A."/>
            <person name="Mouchard L."/>
            <person name="Reinert K."/>
            <person name="Remington K.A."/>
            <person name="Clark A.G."/>
            <person name="Waterman M.S."/>
            <person name="Eichler E.E."/>
            <person name="Adams M.D."/>
            <person name="Hunkapiller M.W."/>
            <person name="Myers E.W."/>
            <person name="Venter J.C."/>
        </authorList>
    </citation>
    <scope>NUCLEOTIDE SEQUENCE [LARGE SCALE GENOMIC DNA]</scope>
</reference>
<reference key="5">
    <citation type="journal article" date="2004" name="Genome Res.">
        <title>The status, quality, and expansion of the NIH full-length cDNA project: the Mammalian Gene Collection (MGC).</title>
        <authorList>
            <consortium name="The MGC Project Team"/>
        </authorList>
    </citation>
    <scope>NUCLEOTIDE SEQUENCE [LARGE SCALE MRNA]</scope>
    <source>
        <tissue>Melanoma</tissue>
    </source>
</reference>
<reference key="6">
    <citation type="journal article" date="2006" name="Cell">
        <title>Global, in vivo, and site-specific phosphorylation dynamics in signaling networks.</title>
        <authorList>
            <person name="Olsen J.V."/>
            <person name="Blagoev B."/>
            <person name="Gnad F."/>
            <person name="Macek B."/>
            <person name="Kumar C."/>
            <person name="Mortensen P."/>
            <person name="Mann M."/>
        </authorList>
    </citation>
    <scope>IDENTIFICATION BY MASS SPECTROMETRY [LARGE SCALE ANALYSIS]</scope>
    <source>
        <tissue>Cervix carcinoma</tissue>
    </source>
</reference>
<reference key="7">
    <citation type="journal article" date="2008" name="Proc. Natl. Acad. Sci. U.S.A.">
        <title>A quantitative atlas of mitotic phosphorylation.</title>
        <authorList>
            <person name="Dephoure N."/>
            <person name="Zhou C."/>
            <person name="Villen J."/>
            <person name="Beausoleil S.A."/>
            <person name="Bakalarski C.E."/>
            <person name="Elledge S.J."/>
            <person name="Gygi S.P."/>
        </authorList>
    </citation>
    <scope>PHOSPHORYLATION [LARGE SCALE ANALYSIS] AT SER-166</scope>
    <scope>IDENTIFICATION BY MASS SPECTROMETRY [LARGE SCALE ANALYSIS]</scope>
    <source>
        <tissue>Cervix carcinoma</tissue>
    </source>
</reference>
<reference key="8">
    <citation type="journal article" date="2009" name="Sci. Signal.">
        <title>Quantitative phosphoproteomic analysis of T cell receptor signaling reveals system-wide modulation of protein-protein interactions.</title>
        <authorList>
            <person name="Mayya V."/>
            <person name="Lundgren D.H."/>
            <person name="Hwang S.-I."/>
            <person name="Rezaul K."/>
            <person name="Wu L."/>
            <person name="Eng J.K."/>
            <person name="Rodionov V."/>
            <person name="Han D.K."/>
        </authorList>
    </citation>
    <scope>IDENTIFICATION BY MASS SPECTROMETRY [LARGE SCALE ANALYSIS]</scope>
    <source>
        <tissue>Leukemic T-cell</tissue>
    </source>
</reference>
<reference key="9">
    <citation type="journal article" date="2010" name="Sci. Signal.">
        <title>Quantitative phosphoproteomics reveals widespread full phosphorylation site occupancy during mitosis.</title>
        <authorList>
            <person name="Olsen J.V."/>
            <person name="Vermeulen M."/>
            <person name="Santamaria A."/>
            <person name="Kumar C."/>
            <person name="Miller M.L."/>
            <person name="Jensen L.J."/>
            <person name="Gnad F."/>
            <person name="Cox J."/>
            <person name="Jensen T.S."/>
            <person name="Nigg E.A."/>
            <person name="Brunak S."/>
            <person name="Mann M."/>
        </authorList>
    </citation>
    <scope>PHOSPHORYLATION [LARGE SCALE ANALYSIS] AT SER-134</scope>
    <scope>IDENTIFICATION BY MASS SPECTROMETRY [LARGE SCALE ANALYSIS]</scope>
    <source>
        <tissue>Cervix carcinoma</tissue>
    </source>
</reference>
<reference key="10">
    <citation type="journal article" date="2011" name="BMC Syst. Biol.">
        <title>Initial characterization of the human central proteome.</title>
        <authorList>
            <person name="Burkard T.R."/>
            <person name="Planyavsky M."/>
            <person name="Kaupe I."/>
            <person name="Breitwieser F.P."/>
            <person name="Buerckstuemmer T."/>
            <person name="Bennett K.L."/>
            <person name="Superti-Furga G."/>
            <person name="Colinge J."/>
        </authorList>
    </citation>
    <scope>IDENTIFICATION BY MASS SPECTROMETRY [LARGE SCALE ANALYSIS]</scope>
</reference>
<reference key="11">
    <citation type="journal article" date="2011" name="Sci. Signal.">
        <title>System-wide temporal characterization of the proteome and phosphoproteome of human embryonic stem cell differentiation.</title>
        <authorList>
            <person name="Rigbolt K.T."/>
            <person name="Prokhorova T.A."/>
            <person name="Akimov V."/>
            <person name="Henningsen J."/>
            <person name="Johansen P.T."/>
            <person name="Kratchmarova I."/>
            <person name="Kassem M."/>
            <person name="Mann M."/>
            <person name="Olsen J.V."/>
            <person name="Blagoev B."/>
        </authorList>
    </citation>
    <scope>IDENTIFICATION BY MASS SPECTROMETRY [LARGE SCALE ANALYSIS]</scope>
</reference>
<reference key="12">
    <citation type="journal article" date="2011" name="Transcription">
        <title>Control of the RNA polymerase II phosphorylation state in promoter regions by CTD interaction domain-containing proteins RPRD1A and RPRD1B.</title>
        <authorList>
            <person name="Ni Z."/>
            <person name="Olsen J.B."/>
            <person name="Guo X."/>
            <person name="Zhong G."/>
            <person name="Ruan E.D."/>
            <person name="Marcon E."/>
            <person name="Young P."/>
            <person name="Guo H."/>
            <person name="Li J."/>
            <person name="Moffat J."/>
            <person name="Emili A."/>
            <person name="Greenblatt J.F."/>
        </authorList>
    </citation>
    <scope>IDENTIFICATION IN THE RNA POLYMERASE II COMPLEX</scope>
    <scope>FUNCTION</scope>
    <scope>SUBCELLULAR LOCATION</scope>
</reference>
<reference key="13">
    <citation type="journal article" date="2012" name="Mol. Cell. Proteomics">
        <title>Comparative large-scale characterisation of plant vs. mammal proteins reveals similar and idiosyncratic N-alpha acetylation features.</title>
        <authorList>
            <person name="Bienvenut W.V."/>
            <person name="Sumpton D."/>
            <person name="Martinez A."/>
            <person name="Lilla S."/>
            <person name="Espagne C."/>
            <person name="Meinnel T."/>
            <person name="Giglione C."/>
        </authorList>
    </citation>
    <scope>ACETYLATION [LARGE SCALE ANALYSIS] AT SER-2</scope>
    <scope>CLEAVAGE OF INITIATOR METHIONINE [LARGE SCALE ANALYSIS]</scope>
    <scope>IDENTIFICATION BY MASS SPECTROMETRY [LARGE SCALE ANALYSIS]</scope>
</reference>
<reference key="14">
    <citation type="journal article" date="2013" name="J. Proteome Res.">
        <title>Toward a comprehensive characterization of a human cancer cell phosphoproteome.</title>
        <authorList>
            <person name="Zhou H."/>
            <person name="Di Palma S."/>
            <person name="Preisinger C."/>
            <person name="Peng M."/>
            <person name="Polat A.N."/>
            <person name="Heck A.J."/>
            <person name="Mohammed S."/>
        </authorList>
    </citation>
    <scope>PHOSPHORYLATION [LARGE SCALE ANALYSIS] AT SER-134</scope>
    <scope>IDENTIFICATION BY MASS SPECTROMETRY [LARGE SCALE ANALYSIS]</scope>
    <source>
        <tissue>Cervix carcinoma</tissue>
        <tissue>Erythroleukemia</tissue>
    </source>
</reference>
<reference key="15">
    <citation type="journal article" date="2014" name="J. Proteomics">
        <title>An enzyme assisted RP-RPLC approach for in-depth analysis of human liver phosphoproteome.</title>
        <authorList>
            <person name="Bian Y."/>
            <person name="Song C."/>
            <person name="Cheng K."/>
            <person name="Dong M."/>
            <person name="Wang F."/>
            <person name="Huang J."/>
            <person name="Sun D."/>
            <person name="Wang L."/>
            <person name="Ye M."/>
            <person name="Zou H."/>
        </authorList>
    </citation>
    <scope>PHOSPHORYLATION [LARGE SCALE ANALYSIS] AT SER-132; SER-134 AND TYR-161</scope>
    <scope>IDENTIFICATION BY MASS SPECTROMETRY [LARGE SCALE ANALYSIS]</scope>
    <source>
        <tissue>Liver</tissue>
    </source>
</reference>
<reference evidence="10 11" key="16">
    <citation type="submission" date="2012-06" db="PDB data bank">
        <title>CID of human RPRD1B.</title>
        <authorList>
            <consortium name="Structural genomics consortium (SGC)"/>
        </authorList>
    </citation>
    <scope>X-RAY CRYSTALLOGRAPHY (1.90 ANGSTROMS) OF 2-135</scope>
</reference>
<reference evidence="12" key="17">
    <citation type="journal article" date="2014" name="Sci. China Life Sci.">
        <title>Structural basis for the recognition of RNA polymerase II C-terminal domain by CREPT and p15RS.</title>
        <authorList>
            <person name="Mei K."/>
            <person name="Jin Z."/>
            <person name="Ren F."/>
            <person name="Wang Y."/>
            <person name="Chang Z."/>
            <person name="Wang X."/>
        </authorList>
    </citation>
    <scope>X-RAY CRYSTALLOGRAPHY (2.80 ANGSTROMS) OF 177-326</scope>
    <scope>FUNCTION</scope>
    <scope>INTERACTION WITH POLR2A</scope>
</reference>
<reference evidence="9 13 14" key="18">
    <citation type="journal article" date="2014" name="Nat. Struct. Mol. Biol.">
        <title>RPRD1A and RPRD1B are human RNA polymerase II C-terminal domain scaffolds for Ser5 dephosphorylation.</title>
        <authorList>
            <person name="Ni Z."/>
            <person name="Xu C."/>
            <person name="Guo X."/>
            <person name="Hunter G.O."/>
            <person name="Kuznetsova O.V."/>
            <person name="Tempel W."/>
            <person name="Marcon E."/>
            <person name="Zhong G."/>
            <person name="Guo H."/>
            <person name="Kuo W.H."/>
            <person name="Li J."/>
            <person name="Young P."/>
            <person name="Olsen J.B."/>
            <person name="Wan C."/>
            <person name="Loppnau P."/>
            <person name="El Bakkouri M."/>
            <person name="Senisterra G.A."/>
            <person name="He H."/>
            <person name="Huang H."/>
            <person name="Sidhu S.S."/>
            <person name="Emili A."/>
            <person name="Murphy S."/>
            <person name="Mosley A.L."/>
            <person name="Arrowsmith C.H."/>
            <person name="Min J."/>
            <person name="Greenblatt J.F."/>
        </authorList>
    </citation>
    <scope>X-RAY CRYSTALLOGRAPHY (1.85 ANGSTROMS) OF 2-135</scope>
    <scope>MUTAGENESIS OF ARG-114</scope>
    <scope>FUNCTION</scope>
    <scope>SUBUNIT</scope>
</reference>
<proteinExistence type="evidence at protein level"/>
<evidence type="ECO:0000250" key="1">
    <source>
        <dbReference type="UniProtKB" id="Q96P16"/>
    </source>
</evidence>
<evidence type="ECO:0000255" key="2">
    <source>
        <dbReference type="PROSITE-ProRule" id="PRU00724"/>
    </source>
</evidence>
<evidence type="ECO:0000256" key="3">
    <source>
        <dbReference type="SAM" id="MobiDB-lite"/>
    </source>
</evidence>
<evidence type="ECO:0000269" key="4">
    <source>
    </source>
</evidence>
<evidence type="ECO:0000269" key="5">
    <source>
    </source>
</evidence>
<evidence type="ECO:0000269" key="6">
    <source>
    </source>
</evidence>
<evidence type="ECO:0000269" key="7">
    <source>
    </source>
</evidence>
<evidence type="ECO:0000305" key="8"/>
<evidence type="ECO:0007744" key="9">
    <source>
        <dbReference type="PDB" id="4FLA"/>
    </source>
</evidence>
<evidence type="ECO:0007744" key="10">
    <source>
        <dbReference type="PDB" id="4FU3"/>
    </source>
</evidence>
<evidence type="ECO:0007744" key="11">
    <source>
        <dbReference type="PDB" id="4HFG"/>
    </source>
</evidence>
<evidence type="ECO:0007744" key="12">
    <source>
        <dbReference type="PDB" id="4NAD"/>
    </source>
</evidence>
<evidence type="ECO:0007744" key="13">
    <source>
        <dbReference type="PDB" id="4Q94"/>
    </source>
</evidence>
<evidence type="ECO:0007744" key="14">
    <source>
        <dbReference type="PDB" id="4Q96"/>
    </source>
</evidence>
<evidence type="ECO:0007744" key="15">
    <source>
    </source>
</evidence>
<evidence type="ECO:0007744" key="16">
    <source>
    </source>
</evidence>
<evidence type="ECO:0007744" key="17">
    <source>
    </source>
</evidence>
<evidence type="ECO:0007744" key="18">
    <source>
    </source>
</evidence>
<evidence type="ECO:0007744" key="19">
    <source>
    </source>
</evidence>
<evidence type="ECO:0007829" key="20">
    <source>
        <dbReference type="PDB" id="4FLA"/>
    </source>
</evidence>
<evidence type="ECO:0007829" key="21">
    <source>
        <dbReference type="PDB" id="4Q94"/>
    </source>
</evidence>
<comment type="function">
    <text evidence="4 5 6 7">Interacts with phosphorylated C-terminal heptapeptide repeat domain (CTD) of the largest RNA polymerase II subunit POLR2A, and participates in dephosphorylation of the CTD by RPAP2. Transcriptional regulator which enhances expression of CCND1. Promotes binding of RNA polymerase II to the CCDN1 promoter and to the termination region before the poly-A site but decreases its binding after the poly-A site. Prevents RNA polymerase II from reading through the 3' end termination site and may allow it to be recruited back to the promoter through promotion of the formation of a chromatin loop. Also enhances the transcription of a number of other cell cycle-related genes including CDK2, CDK4, CDK6 and cyclin-E but not CDKN1A, CDKN1B or cyclin-A. Promotes cell proliferation.</text>
</comment>
<comment type="subunit">
    <text evidence="4 6 7">Homodimer (PubMed:24997600). May form a heterodimer with RPRD1A (PubMed:24997600). Associates with RPAP2 (PubMed:24997600). Associates with the RNA polymerase II complex (PubMed:22231121, PubMed:24399136, PubMed:24997600).</text>
</comment>
<comment type="interaction">
    <interactant intactId="EBI-747925">
        <id>Q9NQG5</id>
    </interactant>
    <interactant intactId="EBI-2653038">
        <id>Q9NQY0</id>
        <label>BIN3</label>
    </interactant>
    <organismsDiffer>false</organismsDiffer>
    <experiments>3</experiments>
</comment>
<comment type="interaction">
    <interactant intactId="EBI-747925">
        <id>Q9NQG5</id>
    </interactant>
    <interactant intactId="EBI-979174">
        <id>Q53HL2</id>
        <label>CDCA8</label>
    </interactant>
    <organismsDiffer>false</organismsDiffer>
    <experiments>3</experiments>
</comment>
<comment type="interaction">
    <interactant intactId="EBI-747925">
        <id>Q9NQG5</id>
    </interactant>
    <interactant intactId="EBI-742054">
        <id>Q96D03</id>
        <label>DDIT4L</label>
    </interactant>
    <organismsDiffer>false</organismsDiffer>
    <experiments>3</experiments>
</comment>
<comment type="interaction">
    <interactant intactId="EBI-747925">
        <id>Q9NQG5</id>
    </interactant>
    <interactant intactId="EBI-740641">
        <id>Q9NP66</id>
        <label>HMG20A</label>
    </interactant>
    <organismsDiffer>false</organismsDiffer>
    <experiments>3</experiments>
</comment>
<comment type="interaction">
    <interactant intactId="EBI-747925">
        <id>Q9NQG5</id>
    </interactant>
    <interactant intactId="EBI-3923226">
        <id>P09017</id>
        <label>HOXC4</label>
    </interactant>
    <organismsDiffer>false</organismsDiffer>
    <experiments>3</experiments>
</comment>
<comment type="interaction">
    <interactant intactId="EBI-747925">
        <id>Q9NQG5</id>
    </interactant>
    <interactant intactId="EBI-591778">
        <id>P61970</id>
        <label>NUTF2</label>
    </interactant>
    <organismsDiffer>false</organismsDiffer>
    <experiments>3</experiments>
</comment>
<comment type="interaction">
    <interactant intactId="EBI-747925">
        <id>Q9NQG5</id>
    </interactant>
    <interactant intactId="EBI-356973">
        <id>O15212</id>
        <label>PFDN6</label>
    </interactant>
    <organismsDiffer>false</organismsDiffer>
    <experiments>3</experiments>
</comment>
<comment type="interaction">
    <interactant intactId="EBI-747925">
        <id>Q9NQG5</id>
    </interactant>
    <interactant intactId="EBI-11532361">
        <id>P78356-2</id>
        <label>PIP4K2B</label>
    </interactant>
    <organismsDiffer>false</organismsDiffer>
    <experiments>3</experiments>
</comment>
<comment type="interaction">
    <interactant intactId="EBI-747925">
        <id>Q9NQG5</id>
    </interactant>
    <interactant intactId="EBI-295301">
        <id>P24928</id>
        <label>POLR2A</label>
    </interactant>
    <organismsDiffer>false</organismsDiffer>
    <experiments>12</experiments>
</comment>
<comment type="interaction">
    <interactant intactId="EBI-747925">
        <id>Q9NQG5</id>
    </interactant>
    <interactant intactId="EBI-372273">
        <id>P20618</id>
        <label>PSMB1</label>
    </interactant>
    <organismsDiffer>false</organismsDiffer>
    <experiments>3</experiments>
</comment>
<comment type="interaction">
    <interactant intactId="EBI-747925">
        <id>Q9NQG5</id>
    </interactant>
    <interactant intactId="EBI-2845202">
        <id>Q86WH2</id>
        <label>RASSF3</label>
    </interactant>
    <organismsDiffer>false</organismsDiffer>
    <experiments>3</experiments>
</comment>
<comment type="interaction">
    <interactant intactId="EBI-747925">
        <id>Q9NQG5</id>
    </interactant>
    <interactant intactId="EBI-395878">
        <id>Q8IXW5</id>
        <label>RPAP2</label>
    </interactant>
    <organismsDiffer>false</organismsDiffer>
    <experiments>6</experiments>
</comment>
<comment type="interaction">
    <interactant intactId="EBI-747925">
        <id>Q9NQG5</id>
    </interactant>
    <interactant intactId="EBI-1053506">
        <id>Q96P16</id>
        <label>RPRD1A</label>
    </interactant>
    <organismsDiffer>false</organismsDiffer>
    <experiments>6</experiments>
</comment>
<comment type="interaction">
    <interactant intactId="EBI-747925">
        <id>Q9NQG5</id>
    </interactant>
    <interactant intactId="EBI-16112633">
        <id>Q96P16-1</id>
        <label>RPRD1A</label>
    </interactant>
    <organismsDiffer>false</organismsDiffer>
    <experiments>4</experiments>
</comment>
<comment type="interaction">
    <interactant intactId="EBI-747925">
        <id>Q9NQG5</id>
    </interactant>
    <interactant intactId="EBI-12840198">
        <id>Q96P16-3</id>
        <label>RPRD1A</label>
    </interactant>
    <organismsDiffer>false</organismsDiffer>
    <experiments>3</experiments>
</comment>
<comment type="interaction">
    <interactant intactId="EBI-747925">
        <id>Q9NQG5</id>
    </interactant>
    <interactant intactId="EBI-747925">
        <id>Q9NQG5</id>
        <label>RPRD1B</label>
    </interactant>
    <organismsDiffer>false</organismsDiffer>
    <experiments>8</experiments>
</comment>
<comment type="interaction">
    <interactant intactId="EBI-747925">
        <id>Q9NQG5</id>
    </interactant>
    <interactant intactId="EBI-742688">
        <id>Q9NZD8</id>
        <label>SPG21</label>
    </interactant>
    <organismsDiffer>false</organismsDiffer>
    <experiments>3</experiments>
</comment>
<comment type="interaction">
    <interactant intactId="EBI-747925">
        <id>Q9NQG5</id>
    </interactant>
    <interactant intactId="EBI-1053419">
        <id>Q9H5V9</id>
        <label>STEEP1</label>
    </interactant>
    <organismsDiffer>false</organismsDiffer>
    <experiments>3</experiments>
</comment>
<comment type="interaction">
    <interactant intactId="EBI-747925">
        <id>Q9NQG5</id>
    </interactant>
    <interactant intactId="EBI-12076664">
        <id>O14787-2</id>
        <label>TNPO2</label>
    </interactant>
    <organismsDiffer>false</organismsDiffer>
    <experiments>3</experiments>
</comment>
<comment type="interaction">
    <interactant intactId="EBI-747925">
        <id>Q9NQG5</id>
    </interactant>
    <interactant intactId="EBI-10180829">
        <id>Q7KZS0</id>
        <label>UBE2I</label>
    </interactant>
    <organismsDiffer>false</organismsDiffer>
    <experiments>3</experiments>
</comment>
<comment type="interaction">
    <interactant intactId="EBI-747925">
        <id>Q9NQG5</id>
    </interactant>
    <interactant intactId="EBI-12227803">
        <id>Q5SQQ9-2</id>
        <label>VAX1</label>
    </interactant>
    <organismsDiffer>false</organismsDiffer>
    <experiments>3</experiments>
</comment>
<comment type="interaction">
    <interactant intactId="EBI-747925">
        <id>Q9NQG5</id>
    </interactant>
    <interactant intactId="EBI-2559305">
        <id>A5D8V6</id>
        <label>VPS37C</label>
    </interactant>
    <organismsDiffer>false</organismsDiffer>
    <experiments>3</experiments>
</comment>
<comment type="subcellular location">
    <subcellularLocation>
        <location evidence="4 5">Nucleus</location>
    </subcellularLocation>
</comment>
<comment type="tissue specificity">
    <text evidence="5">Preferentially expressed in a range of tumor tissues including colon, lung, liver, breast, prostate, stomach, uterine endometrium and cervical cancers with higher levels in tumors than in adjacent non-tumor tissue (at protein level).</text>
</comment>
<comment type="similarity">
    <text evidence="8">Belongs to the UPF0400 (RTT103) family.</text>
</comment>
<comment type="sequence caution" evidence="8">
    <conflict type="miscellaneous discrepancy">
        <sequence resource="EMBL-CDS" id="AAH01696"/>
    </conflict>
    <text>Contaminating sequence. Potential poly-A sequence.</text>
</comment>
<feature type="initiator methionine" description="Removed" evidence="17">
    <location>
        <position position="1"/>
    </location>
</feature>
<feature type="chain" id="PRO_0000079441" description="Regulation of nuclear pre-mRNA domain-containing protein 1B">
    <location>
        <begin position="2"/>
        <end position="326"/>
    </location>
</feature>
<feature type="domain" description="CID" evidence="2">
    <location>
        <begin position="2"/>
        <end position="133"/>
    </location>
</feature>
<feature type="region of interest" description="Disordered" evidence="3">
    <location>
        <begin position="127"/>
        <end position="149"/>
    </location>
</feature>
<feature type="compositionally biased region" description="Basic and acidic residues" evidence="3">
    <location>
        <begin position="128"/>
        <end position="144"/>
    </location>
</feature>
<feature type="modified residue" description="N-acetylserine" evidence="17">
    <location>
        <position position="2"/>
    </location>
</feature>
<feature type="modified residue" description="Phosphoserine" evidence="19">
    <location>
        <position position="132"/>
    </location>
</feature>
<feature type="modified residue" description="Phosphoserine" evidence="16 18 19">
    <location>
        <position position="134"/>
    </location>
</feature>
<feature type="modified residue" description="Phosphotyrosine" evidence="19">
    <location>
        <position position="161"/>
    </location>
</feature>
<feature type="modified residue" description="Phosphoserine" evidence="15">
    <location>
        <position position="166"/>
    </location>
</feature>
<feature type="modified residue" description="Phosphoserine" evidence="1">
    <location>
        <position position="299"/>
    </location>
</feature>
<feature type="mutagenesis site" description="Complete loss of binding to POLR2A CTD in vivo." evidence="7">
    <original>R</original>
    <variation>A</variation>
    <location>
        <position position="114"/>
    </location>
</feature>
<feature type="sequence conflict" description="In Ref. 5; AAH33629." evidence="8" ref="5">
    <original>Q</original>
    <variation>H</variation>
    <location>
        <position position="21"/>
    </location>
</feature>
<feature type="helix" evidence="21">
    <location>
        <begin position="6"/>
        <end position="15"/>
    </location>
</feature>
<feature type="helix" evidence="21">
    <location>
        <begin position="20"/>
        <end position="32"/>
    </location>
</feature>
<feature type="helix" evidence="21">
    <location>
        <begin position="34"/>
        <end position="36"/>
    </location>
</feature>
<feature type="helix" evidence="21">
    <location>
        <begin position="37"/>
        <end position="50"/>
    </location>
</feature>
<feature type="helix" evidence="21">
    <location>
        <begin position="53"/>
        <end position="55"/>
    </location>
</feature>
<feature type="helix" evidence="21">
    <location>
        <begin position="56"/>
        <end position="70"/>
    </location>
</feature>
<feature type="turn" evidence="21">
    <location>
        <begin position="71"/>
        <end position="73"/>
    </location>
</feature>
<feature type="helix" evidence="21">
    <location>
        <begin position="76"/>
        <end position="82"/>
    </location>
</feature>
<feature type="helix" evidence="21">
    <location>
        <begin position="85"/>
        <end position="113"/>
    </location>
</feature>
<feature type="helix" evidence="21">
    <location>
        <begin position="119"/>
        <end position="129"/>
    </location>
</feature>
<feature type="helix" evidence="20">
    <location>
        <begin position="177"/>
        <end position="202"/>
    </location>
</feature>
<feature type="helix" evidence="20">
    <location>
        <begin position="206"/>
        <end position="208"/>
    </location>
</feature>
<feature type="helix" evidence="20">
    <location>
        <begin position="211"/>
        <end position="216"/>
    </location>
</feature>
<feature type="helix" evidence="20">
    <location>
        <begin position="220"/>
        <end position="298"/>
    </location>
</feature>
<name>RPR1B_HUMAN</name>
<accession>Q9NQG5</accession>
<accession>Q1WDE7</accession>
<accession>Q6PKF4</accession>
<dbReference type="EMBL" id="DQ372938">
    <property type="protein sequence ID" value="ABD34791.1"/>
    <property type="molecule type" value="mRNA"/>
</dbReference>
<dbReference type="EMBL" id="AK312468">
    <property type="protein sequence ID" value="BAG35375.1"/>
    <property type="molecule type" value="mRNA"/>
</dbReference>
<dbReference type="EMBL" id="AL109823">
    <property type="status" value="NOT_ANNOTATED_CDS"/>
    <property type="molecule type" value="Genomic_DNA"/>
</dbReference>
<dbReference type="EMBL" id="CH471077">
    <property type="protein sequence ID" value="EAW76045.1"/>
    <property type="molecule type" value="Genomic_DNA"/>
</dbReference>
<dbReference type="EMBL" id="BC001696">
    <property type="protein sequence ID" value="AAH01696.1"/>
    <property type="status" value="ALT_SEQ"/>
    <property type="molecule type" value="mRNA"/>
</dbReference>
<dbReference type="EMBL" id="BC033629">
    <property type="protein sequence ID" value="AAH33629.1"/>
    <property type="molecule type" value="mRNA"/>
</dbReference>
<dbReference type="CCDS" id="CCDS13301.1"/>
<dbReference type="RefSeq" id="NP_067038.1">
    <property type="nucleotide sequence ID" value="NM_021215.4"/>
</dbReference>
<dbReference type="PDB" id="4FLA">
    <property type="method" value="X-ray"/>
    <property type="resolution" value="2.20 A"/>
    <property type="chains" value="A/B/C/D=172-305"/>
</dbReference>
<dbReference type="PDB" id="4FU3">
    <property type="method" value="X-ray"/>
    <property type="resolution" value="1.90 A"/>
    <property type="chains" value="A/B=2-135"/>
</dbReference>
<dbReference type="PDB" id="4HFG">
    <property type="method" value="X-ray"/>
    <property type="resolution" value="2.00 A"/>
    <property type="chains" value="A/B=2-135"/>
</dbReference>
<dbReference type="PDB" id="4NAD">
    <property type="method" value="X-ray"/>
    <property type="resolution" value="2.80 A"/>
    <property type="chains" value="A/B=177-326"/>
</dbReference>
<dbReference type="PDB" id="4Q94">
    <property type="method" value="X-ray"/>
    <property type="resolution" value="1.85 A"/>
    <property type="chains" value="A/B=2-135"/>
</dbReference>
<dbReference type="PDB" id="4Q96">
    <property type="method" value="X-ray"/>
    <property type="resolution" value="1.85 A"/>
    <property type="chains" value="A/B/D/E=2-135"/>
</dbReference>
<dbReference type="PDB" id="9B9L">
    <property type="method" value="X-ray"/>
    <property type="resolution" value="2.50 A"/>
    <property type="chains" value="A/B=3-133"/>
</dbReference>
<dbReference type="PDBsum" id="4FLA"/>
<dbReference type="PDBsum" id="4FU3"/>
<dbReference type="PDBsum" id="4HFG"/>
<dbReference type="PDBsum" id="4NAD"/>
<dbReference type="PDBsum" id="4Q94"/>
<dbReference type="PDBsum" id="4Q96"/>
<dbReference type="PDBsum" id="9B9L"/>
<dbReference type="SMR" id="Q9NQG5"/>
<dbReference type="BioGRID" id="121820">
    <property type="interactions" value="246"/>
</dbReference>
<dbReference type="DIP" id="DIP-61537N"/>
<dbReference type="FunCoup" id="Q9NQG5">
    <property type="interactions" value="3897"/>
</dbReference>
<dbReference type="IntAct" id="Q9NQG5">
    <property type="interactions" value="118"/>
</dbReference>
<dbReference type="MINT" id="Q9NQG5"/>
<dbReference type="STRING" id="9606.ENSP00000362532"/>
<dbReference type="GlyGen" id="Q9NQG5">
    <property type="glycosylation" value="3 sites, 1 O-linked glycan (1 site)"/>
</dbReference>
<dbReference type="iPTMnet" id="Q9NQG5"/>
<dbReference type="MetOSite" id="Q9NQG5"/>
<dbReference type="PhosphoSitePlus" id="Q9NQG5"/>
<dbReference type="BioMuta" id="RPRD1B"/>
<dbReference type="DMDM" id="23813907"/>
<dbReference type="jPOST" id="Q9NQG5"/>
<dbReference type="MassIVE" id="Q9NQG5"/>
<dbReference type="PaxDb" id="9606-ENSP00000362532"/>
<dbReference type="PeptideAtlas" id="Q9NQG5"/>
<dbReference type="ProteomicsDB" id="82148"/>
<dbReference type="Pumba" id="Q9NQG5"/>
<dbReference type="ABCD" id="Q9NQG5">
    <property type="antibodies" value="1 sequenced antibody"/>
</dbReference>
<dbReference type="Antibodypedia" id="26806">
    <property type="antibodies" value="217 antibodies from 27 providers"/>
</dbReference>
<dbReference type="DNASU" id="58490"/>
<dbReference type="Ensembl" id="ENST00000373433.9">
    <property type="protein sequence ID" value="ENSP00000362532.4"/>
    <property type="gene ID" value="ENSG00000101413.12"/>
</dbReference>
<dbReference type="GeneID" id="58490"/>
<dbReference type="KEGG" id="hsa:58490"/>
<dbReference type="MANE-Select" id="ENST00000373433.9">
    <property type="protein sequence ID" value="ENSP00000362532.4"/>
    <property type="RefSeq nucleotide sequence ID" value="NM_021215.4"/>
    <property type="RefSeq protein sequence ID" value="NP_067038.1"/>
</dbReference>
<dbReference type="UCSC" id="uc002xho.5">
    <property type="organism name" value="human"/>
</dbReference>
<dbReference type="AGR" id="HGNC:16209"/>
<dbReference type="CTD" id="58490"/>
<dbReference type="DisGeNET" id="58490"/>
<dbReference type="GeneCards" id="RPRD1B"/>
<dbReference type="HGNC" id="HGNC:16209">
    <property type="gene designation" value="RPRD1B"/>
</dbReference>
<dbReference type="HPA" id="ENSG00000101413">
    <property type="expression patterns" value="Tissue enhanced (liver)"/>
</dbReference>
<dbReference type="MIM" id="614694">
    <property type="type" value="gene"/>
</dbReference>
<dbReference type="neXtProt" id="NX_Q9NQG5"/>
<dbReference type="OpenTargets" id="ENSG00000101413"/>
<dbReference type="PharmGKB" id="PA162402043"/>
<dbReference type="VEuPathDB" id="HostDB:ENSG00000101413"/>
<dbReference type="eggNOG" id="KOG2669">
    <property type="taxonomic scope" value="Eukaryota"/>
</dbReference>
<dbReference type="GeneTree" id="ENSGT00950000183094"/>
<dbReference type="HOGENOM" id="CLU_055523_1_0_1"/>
<dbReference type="InParanoid" id="Q9NQG5"/>
<dbReference type="OMA" id="KTWQREL"/>
<dbReference type="OrthoDB" id="10069473at2759"/>
<dbReference type="PAN-GO" id="Q9NQG5">
    <property type="GO annotations" value="3 GO annotations based on evolutionary models"/>
</dbReference>
<dbReference type="PhylomeDB" id="Q9NQG5"/>
<dbReference type="TreeFam" id="TF320926"/>
<dbReference type="PathwayCommons" id="Q9NQG5"/>
<dbReference type="Reactome" id="R-HSA-6807505">
    <property type="pathway name" value="RNA polymerase II transcribes snRNA genes"/>
</dbReference>
<dbReference type="SignaLink" id="Q9NQG5"/>
<dbReference type="SIGNOR" id="Q9NQG5"/>
<dbReference type="BioGRID-ORCS" id="58490">
    <property type="hits" value="342 hits in 1174 CRISPR screens"/>
</dbReference>
<dbReference type="ChiTaRS" id="RPRD1B">
    <property type="organism name" value="human"/>
</dbReference>
<dbReference type="EvolutionaryTrace" id="Q9NQG5"/>
<dbReference type="GenomeRNAi" id="58490"/>
<dbReference type="Pharos" id="Q9NQG5">
    <property type="development level" value="Tbio"/>
</dbReference>
<dbReference type="PRO" id="PR:Q9NQG5"/>
<dbReference type="Proteomes" id="UP000005640">
    <property type="component" value="Chromosome 20"/>
</dbReference>
<dbReference type="RNAct" id="Q9NQG5">
    <property type="molecule type" value="protein"/>
</dbReference>
<dbReference type="Bgee" id="ENSG00000101413">
    <property type="expression patterns" value="Expressed in ileal mucosa and 175 other cell types or tissues"/>
</dbReference>
<dbReference type="ExpressionAtlas" id="Q9NQG5">
    <property type="expression patterns" value="baseline and differential"/>
</dbReference>
<dbReference type="GO" id="GO:0005654">
    <property type="term" value="C:nucleoplasm"/>
    <property type="evidence" value="ECO:0000314"/>
    <property type="project" value="HPA"/>
</dbReference>
<dbReference type="GO" id="GO:0005634">
    <property type="term" value="C:nucleus"/>
    <property type="evidence" value="ECO:0000314"/>
    <property type="project" value="UniProtKB"/>
</dbReference>
<dbReference type="GO" id="GO:0097550">
    <property type="term" value="C:transcription preinitiation complex"/>
    <property type="evidence" value="ECO:0000314"/>
    <property type="project" value="UniProtKB"/>
</dbReference>
<dbReference type="GO" id="GO:0042802">
    <property type="term" value="F:identical protein binding"/>
    <property type="evidence" value="ECO:0000353"/>
    <property type="project" value="IntAct"/>
</dbReference>
<dbReference type="GO" id="GO:0099122">
    <property type="term" value="F:RNA polymerase II C-terminal domain binding"/>
    <property type="evidence" value="ECO:0007669"/>
    <property type="project" value="InterPro"/>
</dbReference>
<dbReference type="GO" id="GO:0000993">
    <property type="term" value="F:RNA polymerase II complex binding"/>
    <property type="evidence" value="ECO:0000314"/>
    <property type="project" value="UniProtKB"/>
</dbReference>
<dbReference type="GO" id="GO:0031124">
    <property type="term" value="P:mRNA 3'-end processing"/>
    <property type="evidence" value="ECO:0000318"/>
    <property type="project" value="GO_Central"/>
</dbReference>
<dbReference type="GO" id="GO:0008284">
    <property type="term" value="P:positive regulation of cell population proliferation"/>
    <property type="evidence" value="ECO:0000314"/>
    <property type="project" value="UniProtKB"/>
</dbReference>
<dbReference type="GO" id="GO:0045944">
    <property type="term" value="P:positive regulation of transcription by RNA polymerase II"/>
    <property type="evidence" value="ECO:0000314"/>
    <property type="project" value="UniProtKB"/>
</dbReference>
<dbReference type="GO" id="GO:0010564">
    <property type="term" value="P:regulation of cell cycle process"/>
    <property type="evidence" value="ECO:0000314"/>
    <property type="project" value="UniProtKB"/>
</dbReference>
<dbReference type="GO" id="GO:0001111">
    <property type="term" value="P:RNA polymerase II promoter clearance"/>
    <property type="evidence" value="ECO:0000315"/>
    <property type="project" value="UniProtKB"/>
</dbReference>
<dbReference type="CDD" id="cd17012">
    <property type="entry name" value="CID_RPRD1B"/>
    <property type="match status" value="1"/>
</dbReference>
<dbReference type="FunFam" id="1.25.40.90:FF:000007">
    <property type="entry name" value="Regulation of nuclear pre-mRNA domain-containing protein 1B"/>
    <property type="match status" value="1"/>
</dbReference>
<dbReference type="Gene3D" id="1.25.40.90">
    <property type="match status" value="1"/>
</dbReference>
<dbReference type="Gene3D" id="6.10.250.2560">
    <property type="match status" value="1"/>
</dbReference>
<dbReference type="InterPro" id="IPR006569">
    <property type="entry name" value="CID_dom"/>
</dbReference>
<dbReference type="InterPro" id="IPR008942">
    <property type="entry name" value="ENTH_VHS"/>
</dbReference>
<dbReference type="InterPro" id="IPR032337">
    <property type="entry name" value="RPRD1A/B_C"/>
</dbReference>
<dbReference type="InterPro" id="IPR047882">
    <property type="entry name" value="RPRD1B_CID"/>
</dbReference>
<dbReference type="PANTHER" id="PTHR12460">
    <property type="entry name" value="CYCLIN-DEPENDENT KINASE INHIBITOR-RELATED PROTEIN"/>
    <property type="match status" value="1"/>
</dbReference>
<dbReference type="PANTHER" id="PTHR12460:SF3">
    <property type="entry name" value="REGULATION OF NUCLEAR PRE-MRNA DOMAIN-CONTAINING PROTEIN 1B"/>
    <property type="match status" value="1"/>
</dbReference>
<dbReference type="Pfam" id="PF04818">
    <property type="entry name" value="CID"/>
    <property type="match status" value="1"/>
</dbReference>
<dbReference type="Pfam" id="PF16566">
    <property type="entry name" value="CREPT"/>
    <property type="match status" value="1"/>
</dbReference>
<dbReference type="SMART" id="SM00582">
    <property type="entry name" value="RPR"/>
    <property type="match status" value="1"/>
</dbReference>
<dbReference type="SUPFAM" id="SSF48464">
    <property type="entry name" value="ENTH/VHS domain"/>
    <property type="match status" value="1"/>
</dbReference>
<dbReference type="PROSITE" id="PS51391">
    <property type="entry name" value="CID"/>
    <property type="match status" value="1"/>
</dbReference>
<keyword id="KW-0002">3D-structure</keyword>
<keyword id="KW-0007">Acetylation</keyword>
<keyword id="KW-0539">Nucleus</keyword>
<keyword id="KW-0597">Phosphoprotein</keyword>
<keyword id="KW-1267">Proteomics identification</keyword>
<keyword id="KW-1185">Reference proteome</keyword>
<keyword id="KW-0804">Transcription</keyword>
<keyword id="KW-0805">Transcription regulation</keyword>
<organism>
    <name type="scientific">Homo sapiens</name>
    <name type="common">Human</name>
    <dbReference type="NCBI Taxonomy" id="9606"/>
    <lineage>
        <taxon>Eukaryota</taxon>
        <taxon>Metazoa</taxon>
        <taxon>Chordata</taxon>
        <taxon>Craniata</taxon>
        <taxon>Vertebrata</taxon>
        <taxon>Euteleostomi</taxon>
        <taxon>Mammalia</taxon>
        <taxon>Eutheria</taxon>
        <taxon>Euarchontoglires</taxon>
        <taxon>Primates</taxon>
        <taxon>Haplorrhini</taxon>
        <taxon>Catarrhini</taxon>
        <taxon>Hominidae</taxon>
        <taxon>Homo</taxon>
    </lineage>
</organism>
<protein>
    <recommendedName>
        <fullName>Regulation of nuclear pre-mRNA domain-containing protein 1B</fullName>
    </recommendedName>
    <alternativeName>
        <fullName>Cell cycle-related and expression-elevated protein in tumor</fullName>
    </alternativeName>
</protein>
<sequence>MSSFSESALEKKLSELSNSQQSVQTLSLWLIHHRKHAGPIVSVWHRELRKAKSNRKLTFLYLANDVIQNSKRKGPEFTREFESVLVDAFSHVAREADEGCKKPLERLLNIWQERSVYGGEFIQQLKLSMEDSKSPPPKATEEKKSLKRTFQQIQEEEDDDYPGSYSPQDPSAGPLLTEELIKALQDLENAASGDATVRQKIASLPQEVQDVSLLEKITDKEAAERLSKTVDEACLLLAEYNGRLAAELEDRRQLARMLVEYTQNQKDVLSEKEKKLEEYKQKLARVTQVRKELKSHIQSLPDLSLLPNVTGGLAPLPSAGDLFSTD</sequence>
<gene>
    <name type="primary">RPRD1B</name>
    <name type="synonym">C20orf77</name>
    <name type="synonym">CREPT</name>
</gene>